<comment type="cofactor">
    <cofactor evidence="1">
        <name>Zn(2+)</name>
        <dbReference type="ChEBI" id="CHEBI:29105"/>
    </cofactor>
    <text evidence="1">Binds 3 Zn(2+) ions per subunit.</text>
</comment>
<comment type="subunit">
    <text evidence="1">Homotrimer.</text>
</comment>
<comment type="similarity">
    <text evidence="1">Belongs to the PHP family.</text>
</comment>
<protein>
    <recommendedName>
        <fullName evidence="1">Probable phosphatase YcdX</fullName>
        <ecNumber evidence="1">3.1.3.-</ecNumber>
    </recommendedName>
</protein>
<sequence length="245" mass="26832">MYPVDLHMHTVASTHAYSTLSDYIAQAKQKGIKLFAITDHGPDMEDAPHHWHFINMRIWPRVVDGVGILRGIEANIKNVDGEIDCSGKMFDSLDLIIAGFHEPVFAPHDKATNTQAMIATIASGNVHIISHPGNPKYEIDVKAVAEAAAKHQVALEINNSSFLHSRKGSEDNCRAVAAAVRDAGGWVALGSDSHTAFTMGEFEECLKILDAVDFPPERILNVSPRRLLNFLESRGMAPIAEFADL</sequence>
<gene>
    <name evidence="1" type="primary">ycdX</name>
    <name type="ordered locus">EcolC_2565</name>
</gene>
<proteinExistence type="inferred from homology"/>
<name>YCDX_ECOLC</name>
<reference key="1">
    <citation type="submission" date="2008-02" db="EMBL/GenBank/DDBJ databases">
        <title>Complete sequence of Escherichia coli C str. ATCC 8739.</title>
        <authorList>
            <person name="Copeland A."/>
            <person name="Lucas S."/>
            <person name="Lapidus A."/>
            <person name="Glavina del Rio T."/>
            <person name="Dalin E."/>
            <person name="Tice H."/>
            <person name="Bruce D."/>
            <person name="Goodwin L."/>
            <person name="Pitluck S."/>
            <person name="Kiss H."/>
            <person name="Brettin T."/>
            <person name="Detter J.C."/>
            <person name="Han C."/>
            <person name="Kuske C.R."/>
            <person name="Schmutz J."/>
            <person name="Larimer F."/>
            <person name="Land M."/>
            <person name="Hauser L."/>
            <person name="Kyrpides N."/>
            <person name="Mikhailova N."/>
            <person name="Ingram L."/>
            <person name="Richardson P."/>
        </authorList>
    </citation>
    <scope>NUCLEOTIDE SEQUENCE [LARGE SCALE GENOMIC DNA]</scope>
    <source>
        <strain>ATCC 8739 / DSM 1576 / NBRC 3972 / NCIMB 8545 / WDCM 00012 / Crooks</strain>
    </source>
</reference>
<dbReference type="EC" id="3.1.3.-" evidence="1"/>
<dbReference type="EMBL" id="CP000946">
    <property type="protein sequence ID" value="ACA78196.1"/>
    <property type="molecule type" value="Genomic_DNA"/>
</dbReference>
<dbReference type="RefSeq" id="WP_000283664.1">
    <property type="nucleotide sequence ID" value="NZ_MTFT01000032.1"/>
</dbReference>
<dbReference type="SMR" id="B1IV67"/>
<dbReference type="GeneID" id="93776384"/>
<dbReference type="KEGG" id="ecl:EcolC_2565"/>
<dbReference type="HOGENOM" id="CLU_061999_0_1_6"/>
<dbReference type="GO" id="GO:0005829">
    <property type="term" value="C:cytosol"/>
    <property type="evidence" value="ECO:0007669"/>
    <property type="project" value="TreeGrafter"/>
</dbReference>
<dbReference type="GO" id="GO:0016791">
    <property type="term" value="F:phosphatase activity"/>
    <property type="evidence" value="ECO:0007669"/>
    <property type="project" value="UniProtKB-UniRule"/>
</dbReference>
<dbReference type="GO" id="GO:0008270">
    <property type="term" value="F:zinc ion binding"/>
    <property type="evidence" value="ECO:0007669"/>
    <property type="project" value="UniProtKB-UniRule"/>
</dbReference>
<dbReference type="GO" id="GO:0071978">
    <property type="term" value="P:bacterial-type flagellum-dependent swarming motility"/>
    <property type="evidence" value="ECO:0007669"/>
    <property type="project" value="TreeGrafter"/>
</dbReference>
<dbReference type="CDD" id="cd07437">
    <property type="entry name" value="PHP_HisPPase_Ycdx_like"/>
    <property type="match status" value="1"/>
</dbReference>
<dbReference type="FunFam" id="3.20.20.140:FF:000008">
    <property type="entry name" value="Probable phosphatase YcdX"/>
    <property type="match status" value="1"/>
</dbReference>
<dbReference type="Gene3D" id="3.20.20.140">
    <property type="entry name" value="Metal-dependent hydrolases"/>
    <property type="match status" value="1"/>
</dbReference>
<dbReference type="HAMAP" id="MF_01561">
    <property type="entry name" value="YcdX_phosphat"/>
    <property type="match status" value="1"/>
</dbReference>
<dbReference type="InterPro" id="IPR023710">
    <property type="entry name" value="Phosphatase_YcdX_put"/>
</dbReference>
<dbReference type="InterPro" id="IPR004013">
    <property type="entry name" value="PHP_dom"/>
</dbReference>
<dbReference type="InterPro" id="IPR050243">
    <property type="entry name" value="PHP_phosphatase"/>
</dbReference>
<dbReference type="InterPro" id="IPR003141">
    <property type="entry name" value="Pol/His_phosphatase_N"/>
</dbReference>
<dbReference type="InterPro" id="IPR016195">
    <property type="entry name" value="Pol/histidinol_Pase-like"/>
</dbReference>
<dbReference type="NCBIfam" id="NF006702">
    <property type="entry name" value="PRK09248.1"/>
    <property type="match status" value="1"/>
</dbReference>
<dbReference type="PANTHER" id="PTHR36928">
    <property type="entry name" value="PHOSPHATASE YCDX-RELATED"/>
    <property type="match status" value="1"/>
</dbReference>
<dbReference type="PANTHER" id="PTHR36928:SF1">
    <property type="entry name" value="PHOSPHATASE YCDX-RELATED"/>
    <property type="match status" value="1"/>
</dbReference>
<dbReference type="Pfam" id="PF02811">
    <property type="entry name" value="PHP"/>
    <property type="match status" value="1"/>
</dbReference>
<dbReference type="SMART" id="SM00481">
    <property type="entry name" value="POLIIIAc"/>
    <property type="match status" value="1"/>
</dbReference>
<dbReference type="SUPFAM" id="SSF89550">
    <property type="entry name" value="PHP domain-like"/>
    <property type="match status" value="1"/>
</dbReference>
<accession>B1IV67</accession>
<organism>
    <name type="scientific">Escherichia coli (strain ATCC 8739 / DSM 1576 / NBRC 3972 / NCIMB 8545 / WDCM 00012 / Crooks)</name>
    <dbReference type="NCBI Taxonomy" id="481805"/>
    <lineage>
        <taxon>Bacteria</taxon>
        <taxon>Pseudomonadati</taxon>
        <taxon>Pseudomonadota</taxon>
        <taxon>Gammaproteobacteria</taxon>
        <taxon>Enterobacterales</taxon>
        <taxon>Enterobacteriaceae</taxon>
        <taxon>Escherichia</taxon>
    </lineage>
</organism>
<keyword id="KW-0378">Hydrolase</keyword>
<keyword id="KW-0479">Metal-binding</keyword>
<keyword id="KW-0862">Zinc</keyword>
<evidence type="ECO:0000255" key="1">
    <source>
        <dbReference type="HAMAP-Rule" id="MF_01561"/>
    </source>
</evidence>
<feature type="chain" id="PRO_1000087806" description="Probable phosphatase YcdX">
    <location>
        <begin position="1"/>
        <end position="245"/>
    </location>
</feature>
<feature type="binding site" evidence="1">
    <location>
        <position position="7"/>
    </location>
    <ligand>
        <name>Zn(2+)</name>
        <dbReference type="ChEBI" id="CHEBI:29105"/>
        <label>1</label>
    </ligand>
</feature>
<feature type="binding site" evidence="1">
    <location>
        <position position="9"/>
    </location>
    <ligand>
        <name>Zn(2+)</name>
        <dbReference type="ChEBI" id="CHEBI:29105"/>
        <label>1</label>
    </ligand>
</feature>
<feature type="binding site" evidence="1">
    <location>
        <position position="15"/>
    </location>
    <ligand>
        <name>Zn(2+)</name>
        <dbReference type="ChEBI" id="CHEBI:29105"/>
        <label>2</label>
    </ligand>
</feature>
<feature type="binding site" evidence="1">
    <location>
        <position position="40"/>
    </location>
    <ligand>
        <name>Zn(2+)</name>
        <dbReference type="ChEBI" id="CHEBI:29105"/>
        <label>2</label>
    </ligand>
</feature>
<feature type="binding site" evidence="1">
    <location>
        <position position="73"/>
    </location>
    <ligand>
        <name>Zn(2+)</name>
        <dbReference type="ChEBI" id="CHEBI:29105"/>
        <label>1</label>
    </ligand>
</feature>
<feature type="binding site" evidence="1">
    <location>
        <position position="73"/>
    </location>
    <ligand>
        <name>Zn(2+)</name>
        <dbReference type="ChEBI" id="CHEBI:29105"/>
        <label>3</label>
    </ligand>
</feature>
<feature type="binding site" evidence="1">
    <location>
        <position position="101"/>
    </location>
    <ligand>
        <name>Zn(2+)</name>
        <dbReference type="ChEBI" id="CHEBI:29105"/>
        <label>3</label>
    </ligand>
</feature>
<feature type="binding site" evidence="1">
    <location>
        <position position="131"/>
    </location>
    <ligand>
        <name>Zn(2+)</name>
        <dbReference type="ChEBI" id="CHEBI:29105"/>
        <label>3</label>
    </ligand>
</feature>
<feature type="binding site" evidence="1">
    <location>
        <position position="192"/>
    </location>
    <ligand>
        <name>Zn(2+)</name>
        <dbReference type="ChEBI" id="CHEBI:29105"/>
        <label>1</label>
    </ligand>
</feature>
<feature type="binding site" evidence="1">
    <location>
        <position position="194"/>
    </location>
    <ligand>
        <name>Zn(2+)</name>
        <dbReference type="ChEBI" id="CHEBI:29105"/>
        <label>2</label>
    </ligand>
</feature>